<accession>P49938</accession>
<keyword id="KW-0067">ATP-binding</keyword>
<keyword id="KW-1003">Cell membrane</keyword>
<keyword id="KW-0406">Ion transport</keyword>
<keyword id="KW-0408">Iron</keyword>
<keyword id="KW-0410">Iron transport</keyword>
<keyword id="KW-0472">Membrane</keyword>
<keyword id="KW-0547">Nucleotide-binding</keyword>
<keyword id="KW-1185">Reference proteome</keyword>
<keyword id="KW-1278">Translocase</keyword>
<keyword id="KW-0813">Transport</keyword>
<comment type="function">
    <text evidence="1">Part of the ABC transporter complex FhuBGCD involved in iron(3+)-hydroxamate import. Responsible for energy coupling to the transport system (By similarity).</text>
</comment>
<comment type="catalytic activity">
    <reaction>
        <text>ATP + H2O + Fe(3+)-hydroxamate complex-[hydroxamate-binding protein]Side 1 = ADP + phosphate + Fe(3+)-hydroxamate complexSide 2 + [hydroxamate-binding protein]Side 1.</text>
        <dbReference type="EC" id="7.2.2.16"/>
    </reaction>
</comment>
<comment type="subunit">
    <text evidence="1">The complex is composed of an ATP-binding protein (FhuC), two transmembrane proteins (FhuB and FhuG) and a solute-binding protein (FhuD or YxeB).</text>
</comment>
<comment type="subcellular location">
    <subcellularLocation>
        <location evidence="1">Cell membrane</location>
        <topology evidence="1">Peripheral membrane protein</topology>
    </subcellularLocation>
</comment>
<comment type="similarity">
    <text evidence="3">Belongs to the ABC transporter superfamily. Iron (Fe3+)-hydroxamate importer (TC 3.A.1.14.7) family.</text>
</comment>
<proteinExistence type="inferred from homology"/>
<sequence>MNSLSTEQLGIGYGDRVIVEDLNISIPKGKITTLIGPNGCGKSTILKTMSRIMRSHAGAVYLNGKAIHKMSTKDIAKDMAILPQTPEAPSGLTVHELVSYGRFPHQSGFGRLNDEDRRIIKWALEETGMAEYAERPIEALSGGQRQRVWIAMALAQGTELLLLDEPTTYLDLAHQLEILQLLDRLNKEQGRTILMVIHDLNHAARFSHYMIALKKGTVIKEGTALEVMTPDILKQVFQIDAEIVTDPRTNKPVCLTYDLIKNEKELVTV</sequence>
<dbReference type="EC" id="7.2.2.16"/>
<dbReference type="EMBL" id="X93092">
    <property type="protein sequence ID" value="CAA63645.1"/>
    <property type="molecule type" value="Genomic_DNA"/>
</dbReference>
<dbReference type="EMBL" id="AJ223978">
    <property type="protein sequence ID" value="CAA11722.1"/>
    <property type="molecule type" value="Genomic_DNA"/>
</dbReference>
<dbReference type="EMBL" id="AL009126">
    <property type="protein sequence ID" value="CAB15335.1"/>
    <property type="molecule type" value="Genomic_DNA"/>
</dbReference>
<dbReference type="PIR" id="B69622">
    <property type="entry name" value="B69622"/>
</dbReference>
<dbReference type="RefSeq" id="NP_391210.1">
    <property type="nucleotide sequence ID" value="NC_000964.3"/>
</dbReference>
<dbReference type="RefSeq" id="WP_003243882.1">
    <property type="nucleotide sequence ID" value="NZ_OZ025638.1"/>
</dbReference>
<dbReference type="SMR" id="P49938"/>
<dbReference type="FunCoup" id="P49938">
    <property type="interactions" value="95"/>
</dbReference>
<dbReference type="STRING" id="224308.BSU33290"/>
<dbReference type="PaxDb" id="224308-BSU33290"/>
<dbReference type="DNASU" id="935994"/>
<dbReference type="EnsemblBacteria" id="CAB15335">
    <property type="protein sequence ID" value="CAB15335"/>
    <property type="gene ID" value="BSU_33290"/>
</dbReference>
<dbReference type="GeneID" id="935994"/>
<dbReference type="KEGG" id="bsu:BSU33290"/>
<dbReference type="PATRIC" id="fig|224308.179.peg.3613"/>
<dbReference type="eggNOG" id="COG1120">
    <property type="taxonomic scope" value="Bacteria"/>
</dbReference>
<dbReference type="InParanoid" id="P49938"/>
<dbReference type="OrthoDB" id="9787851at2"/>
<dbReference type="PhylomeDB" id="P49938"/>
<dbReference type="BioCyc" id="BSUB:BSU33290-MONOMER"/>
<dbReference type="Proteomes" id="UP000001570">
    <property type="component" value="Chromosome"/>
</dbReference>
<dbReference type="GO" id="GO:0005886">
    <property type="term" value="C:plasma membrane"/>
    <property type="evidence" value="ECO:0007669"/>
    <property type="project" value="UniProtKB-SubCell"/>
</dbReference>
<dbReference type="GO" id="GO:0015625">
    <property type="term" value="F:ABC-type ferric hydroxamate transporter activity"/>
    <property type="evidence" value="ECO:0007669"/>
    <property type="project" value="UniProtKB-EC"/>
</dbReference>
<dbReference type="GO" id="GO:0005524">
    <property type="term" value="F:ATP binding"/>
    <property type="evidence" value="ECO:0007669"/>
    <property type="project" value="UniProtKB-KW"/>
</dbReference>
<dbReference type="GO" id="GO:0016887">
    <property type="term" value="F:ATP hydrolysis activity"/>
    <property type="evidence" value="ECO:0007669"/>
    <property type="project" value="InterPro"/>
</dbReference>
<dbReference type="CDD" id="cd03214">
    <property type="entry name" value="ABC_Iron-Siderophores_B12_Hemin"/>
    <property type="match status" value="1"/>
</dbReference>
<dbReference type="FunFam" id="3.40.50.300:FF:000134">
    <property type="entry name" value="Iron-enterobactin ABC transporter ATP-binding protein"/>
    <property type="match status" value="1"/>
</dbReference>
<dbReference type="Gene3D" id="3.40.50.300">
    <property type="entry name" value="P-loop containing nucleotide triphosphate hydrolases"/>
    <property type="match status" value="1"/>
</dbReference>
<dbReference type="InterPro" id="IPR003593">
    <property type="entry name" value="AAA+_ATPase"/>
</dbReference>
<dbReference type="InterPro" id="IPR003439">
    <property type="entry name" value="ABC_transporter-like_ATP-bd"/>
</dbReference>
<dbReference type="InterPro" id="IPR017871">
    <property type="entry name" value="ABC_transporter-like_CS"/>
</dbReference>
<dbReference type="InterPro" id="IPR027417">
    <property type="entry name" value="P-loop_NTPase"/>
</dbReference>
<dbReference type="InterPro" id="IPR051535">
    <property type="entry name" value="Siderophore_ABC-ATPase"/>
</dbReference>
<dbReference type="PANTHER" id="PTHR42771">
    <property type="entry name" value="IRON(3+)-HYDROXAMATE IMPORT ATP-BINDING PROTEIN FHUC"/>
    <property type="match status" value="1"/>
</dbReference>
<dbReference type="PANTHER" id="PTHR42771:SF4">
    <property type="entry name" value="IRON(3+)-HYDROXAMATE IMPORT ATP-BINDING PROTEIN FHUC"/>
    <property type="match status" value="1"/>
</dbReference>
<dbReference type="Pfam" id="PF00005">
    <property type="entry name" value="ABC_tran"/>
    <property type="match status" value="1"/>
</dbReference>
<dbReference type="SMART" id="SM00382">
    <property type="entry name" value="AAA"/>
    <property type="match status" value="1"/>
</dbReference>
<dbReference type="SUPFAM" id="SSF52540">
    <property type="entry name" value="P-loop containing nucleoside triphosphate hydrolases"/>
    <property type="match status" value="1"/>
</dbReference>
<dbReference type="PROSITE" id="PS00211">
    <property type="entry name" value="ABC_TRANSPORTER_1"/>
    <property type="match status" value="1"/>
</dbReference>
<dbReference type="PROSITE" id="PS50893">
    <property type="entry name" value="ABC_TRANSPORTER_2"/>
    <property type="match status" value="1"/>
</dbReference>
<organism>
    <name type="scientific">Bacillus subtilis (strain 168)</name>
    <dbReference type="NCBI Taxonomy" id="224308"/>
    <lineage>
        <taxon>Bacteria</taxon>
        <taxon>Bacillati</taxon>
        <taxon>Bacillota</taxon>
        <taxon>Bacilli</taxon>
        <taxon>Bacillales</taxon>
        <taxon>Bacillaceae</taxon>
        <taxon>Bacillus</taxon>
    </lineage>
</organism>
<reference key="1">
    <citation type="submission" date="1995-11" db="EMBL/GenBank/DDBJ databases">
        <authorList>
            <person name="Schneider R."/>
            <person name="Hantke K."/>
        </authorList>
    </citation>
    <scope>NUCLEOTIDE SEQUENCE [GENOMIC DNA]</scope>
    <source>
        <strain>168</strain>
    </source>
</reference>
<reference key="2">
    <citation type="journal article" date="1998" name="Microbiology">
        <title>The yvsA-yvqA (293 degrees - 289 degrees) region of the Bacillus subtilis chromosome containing genes involved in metal ion uptake and a putative sigma factor.</title>
        <authorList>
            <person name="Wipat A."/>
            <person name="Brignell C.S."/>
            <person name="Guy J.B."/>
            <person name="Rose M."/>
            <person name="Emmerson P.T."/>
            <person name="Harwood C.R."/>
        </authorList>
    </citation>
    <scope>NUCLEOTIDE SEQUENCE [GENOMIC DNA]</scope>
    <source>
        <strain>168</strain>
    </source>
</reference>
<reference key="3">
    <citation type="journal article" date="1997" name="Nature">
        <title>The complete genome sequence of the Gram-positive bacterium Bacillus subtilis.</title>
        <authorList>
            <person name="Kunst F."/>
            <person name="Ogasawara N."/>
            <person name="Moszer I."/>
            <person name="Albertini A.M."/>
            <person name="Alloni G."/>
            <person name="Azevedo V."/>
            <person name="Bertero M.G."/>
            <person name="Bessieres P."/>
            <person name="Bolotin A."/>
            <person name="Borchert S."/>
            <person name="Borriss R."/>
            <person name="Boursier L."/>
            <person name="Brans A."/>
            <person name="Braun M."/>
            <person name="Brignell S.C."/>
            <person name="Bron S."/>
            <person name="Brouillet S."/>
            <person name="Bruschi C.V."/>
            <person name="Caldwell B."/>
            <person name="Capuano V."/>
            <person name="Carter N.M."/>
            <person name="Choi S.-K."/>
            <person name="Codani J.-J."/>
            <person name="Connerton I.F."/>
            <person name="Cummings N.J."/>
            <person name="Daniel R.A."/>
            <person name="Denizot F."/>
            <person name="Devine K.M."/>
            <person name="Duesterhoeft A."/>
            <person name="Ehrlich S.D."/>
            <person name="Emmerson P.T."/>
            <person name="Entian K.-D."/>
            <person name="Errington J."/>
            <person name="Fabret C."/>
            <person name="Ferrari E."/>
            <person name="Foulger D."/>
            <person name="Fritz C."/>
            <person name="Fujita M."/>
            <person name="Fujita Y."/>
            <person name="Fuma S."/>
            <person name="Galizzi A."/>
            <person name="Galleron N."/>
            <person name="Ghim S.-Y."/>
            <person name="Glaser P."/>
            <person name="Goffeau A."/>
            <person name="Golightly E.J."/>
            <person name="Grandi G."/>
            <person name="Guiseppi G."/>
            <person name="Guy B.J."/>
            <person name="Haga K."/>
            <person name="Haiech J."/>
            <person name="Harwood C.R."/>
            <person name="Henaut A."/>
            <person name="Hilbert H."/>
            <person name="Holsappel S."/>
            <person name="Hosono S."/>
            <person name="Hullo M.-F."/>
            <person name="Itaya M."/>
            <person name="Jones L.-M."/>
            <person name="Joris B."/>
            <person name="Karamata D."/>
            <person name="Kasahara Y."/>
            <person name="Klaerr-Blanchard M."/>
            <person name="Klein C."/>
            <person name="Kobayashi Y."/>
            <person name="Koetter P."/>
            <person name="Koningstein G."/>
            <person name="Krogh S."/>
            <person name="Kumano M."/>
            <person name="Kurita K."/>
            <person name="Lapidus A."/>
            <person name="Lardinois S."/>
            <person name="Lauber J."/>
            <person name="Lazarevic V."/>
            <person name="Lee S.-M."/>
            <person name="Levine A."/>
            <person name="Liu H."/>
            <person name="Masuda S."/>
            <person name="Mauel C."/>
            <person name="Medigue C."/>
            <person name="Medina N."/>
            <person name="Mellado R.P."/>
            <person name="Mizuno M."/>
            <person name="Moestl D."/>
            <person name="Nakai S."/>
            <person name="Noback M."/>
            <person name="Noone D."/>
            <person name="O'Reilly M."/>
            <person name="Ogawa K."/>
            <person name="Ogiwara A."/>
            <person name="Oudega B."/>
            <person name="Park S.-H."/>
            <person name="Parro V."/>
            <person name="Pohl T.M."/>
            <person name="Portetelle D."/>
            <person name="Porwollik S."/>
            <person name="Prescott A.M."/>
            <person name="Presecan E."/>
            <person name="Pujic P."/>
            <person name="Purnelle B."/>
            <person name="Rapoport G."/>
            <person name="Rey M."/>
            <person name="Reynolds S."/>
            <person name="Rieger M."/>
            <person name="Rivolta C."/>
            <person name="Rocha E."/>
            <person name="Roche B."/>
            <person name="Rose M."/>
            <person name="Sadaie Y."/>
            <person name="Sato T."/>
            <person name="Scanlan E."/>
            <person name="Schleich S."/>
            <person name="Schroeter R."/>
            <person name="Scoffone F."/>
            <person name="Sekiguchi J."/>
            <person name="Sekowska A."/>
            <person name="Seror S.J."/>
            <person name="Serror P."/>
            <person name="Shin B.-S."/>
            <person name="Soldo B."/>
            <person name="Sorokin A."/>
            <person name="Tacconi E."/>
            <person name="Takagi T."/>
            <person name="Takahashi H."/>
            <person name="Takemaru K."/>
            <person name="Takeuchi M."/>
            <person name="Tamakoshi A."/>
            <person name="Tanaka T."/>
            <person name="Terpstra P."/>
            <person name="Tognoni A."/>
            <person name="Tosato V."/>
            <person name="Uchiyama S."/>
            <person name="Vandenbol M."/>
            <person name="Vannier F."/>
            <person name="Vassarotti A."/>
            <person name="Viari A."/>
            <person name="Wambutt R."/>
            <person name="Wedler E."/>
            <person name="Wedler H."/>
            <person name="Weitzenegger T."/>
            <person name="Winters P."/>
            <person name="Wipat A."/>
            <person name="Yamamoto H."/>
            <person name="Yamane K."/>
            <person name="Yasumoto K."/>
            <person name="Yata K."/>
            <person name="Yoshida K."/>
            <person name="Yoshikawa H.-F."/>
            <person name="Zumstein E."/>
            <person name="Yoshikawa H."/>
            <person name="Danchin A."/>
        </authorList>
    </citation>
    <scope>NUCLEOTIDE SEQUENCE [LARGE SCALE GENOMIC DNA]</scope>
    <source>
        <strain>168</strain>
    </source>
</reference>
<name>FHUC_BACSU</name>
<protein>
    <recommendedName>
        <fullName>Iron(3+)-hydroxamate import ATP-binding protein FhuC</fullName>
        <ecNumber>7.2.2.16</ecNumber>
    </recommendedName>
    <alternativeName>
        <fullName>Ferric hydroxamate uptake protein C</fullName>
    </alternativeName>
    <alternativeName>
        <fullName>Ferrichrome transport ATP-binding protein FhuC</fullName>
    </alternativeName>
    <alternativeName>
        <fullName>Iron(III)-hydroxamate import ATP-binding protein FhuC</fullName>
    </alternativeName>
</protein>
<feature type="chain" id="PRO_0000092326" description="Iron(3+)-hydroxamate import ATP-binding protein FhuC">
    <location>
        <begin position="1"/>
        <end position="269"/>
    </location>
</feature>
<feature type="domain" description="ABC transporter" evidence="2">
    <location>
        <begin position="4"/>
        <end position="240"/>
    </location>
</feature>
<feature type="binding site" evidence="2">
    <location>
        <begin position="36"/>
        <end position="43"/>
    </location>
    <ligand>
        <name>ATP</name>
        <dbReference type="ChEBI" id="CHEBI:30616"/>
    </ligand>
</feature>
<feature type="binding site" evidence="2">
    <location>
        <begin position="160"/>
        <end position="171"/>
    </location>
    <ligand>
        <name>ATP</name>
        <dbReference type="ChEBI" id="CHEBI:30616"/>
    </ligand>
</feature>
<gene>
    <name type="primary">fhuC</name>
    <name type="ordered locus">BSU33290</name>
</gene>
<evidence type="ECO:0000250" key="1"/>
<evidence type="ECO:0000255" key="2">
    <source>
        <dbReference type="PROSITE-ProRule" id="PRU00434"/>
    </source>
</evidence>
<evidence type="ECO:0000305" key="3"/>